<evidence type="ECO:0000255" key="1">
    <source>
        <dbReference type="HAMAP-Rule" id="MF_00009"/>
    </source>
</evidence>
<evidence type="ECO:0000305" key="2"/>
<proteinExistence type="inferred from homology"/>
<protein>
    <recommendedName>
        <fullName evidence="1">Endoribonuclease YbeY</fullName>
        <ecNumber evidence="1">3.1.-.-</ecNumber>
    </recommendedName>
</protein>
<gene>
    <name evidence="1" type="primary">ybeY</name>
    <name type="ordered locus">TM1040_0190</name>
</gene>
<sequence length="170" mass="18582">MILDVVIEDARWDAAALEKQAQEAVSATLAYLELEDEDWEVTVLGCDDARIADLNAEFREKPKPTNVLSWPAQELAAAQDGGQPTPPEVDFMGDAALGDIAISYDTCVKEANLAHKSREDHVRHLLVHGTLHLLGYDHIRDGDATIMETLEVGILGKLGIPDPYIIEDGP</sequence>
<reference key="1">
    <citation type="submission" date="2006-05" db="EMBL/GenBank/DDBJ databases">
        <title>Complete sequence of chromosome of Silicibacter sp. TM1040.</title>
        <authorList>
            <consortium name="US DOE Joint Genome Institute"/>
            <person name="Copeland A."/>
            <person name="Lucas S."/>
            <person name="Lapidus A."/>
            <person name="Barry K."/>
            <person name="Detter J.C."/>
            <person name="Glavina del Rio T."/>
            <person name="Hammon N."/>
            <person name="Israni S."/>
            <person name="Dalin E."/>
            <person name="Tice H."/>
            <person name="Pitluck S."/>
            <person name="Brettin T."/>
            <person name="Bruce D."/>
            <person name="Han C."/>
            <person name="Tapia R."/>
            <person name="Goodwin L."/>
            <person name="Thompson L.S."/>
            <person name="Gilna P."/>
            <person name="Schmutz J."/>
            <person name="Larimer F."/>
            <person name="Land M."/>
            <person name="Hauser L."/>
            <person name="Kyrpides N."/>
            <person name="Kim E."/>
            <person name="Belas R."/>
            <person name="Moran M.A."/>
            <person name="Buchan A."/>
            <person name="Gonzalez J.M."/>
            <person name="Schell M.A."/>
            <person name="Sun F."/>
            <person name="Richardson P."/>
        </authorList>
    </citation>
    <scope>NUCLEOTIDE SEQUENCE [LARGE SCALE GENOMIC DNA]</scope>
    <source>
        <strain>TM1040</strain>
    </source>
</reference>
<keyword id="KW-0963">Cytoplasm</keyword>
<keyword id="KW-0255">Endonuclease</keyword>
<keyword id="KW-0378">Hydrolase</keyword>
<keyword id="KW-0479">Metal-binding</keyword>
<keyword id="KW-0540">Nuclease</keyword>
<keyword id="KW-1185">Reference proteome</keyword>
<keyword id="KW-0690">Ribosome biogenesis</keyword>
<keyword id="KW-0698">rRNA processing</keyword>
<keyword id="KW-0862">Zinc</keyword>
<comment type="function">
    <text evidence="1">Single strand-specific metallo-endoribonuclease involved in late-stage 70S ribosome quality control and in maturation of the 3' terminus of the 16S rRNA.</text>
</comment>
<comment type="cofactor">
    <cofactor evidence="1">
        <name>Zn(2+)</name>
        <dbReference type="ChEBI" id="CHEBI:29105"/>
    </cofactor>
    <text evidence="1">Binds 1 zinc ion.</text>
</comment>
<comment type="subcellular location">
    <subcellularLocation>
        <location evidence="1">Cytoplasm</location>
    </subcellularLocation>
</comment>
<comment type="similarity">
    <text evidence="1">Belongs to the endoribonuclease YbeY family.</text>
</comment>
<comment type="sequence caution" evidence="2">
    <conflict type="erroneous initiation">
        <sequence resource="EMBL-CDS" id="ABF62923"/>
    </conflict>
</comment>
<name>YBEY_RUEST</name>
<dbReference type="EC" id="3.1.-.-" evidence="1"/>
<dbReference type="EMBL" id="CP000377">
    <property type="protein sequence ID" value="ABF62923.1"/>
    <property type="status" value="ALT_INIT"/>
    <property type="molecule type" value="Genomic_DNA"/>
</dbReference>
<dbReference type="RefSeq" id="WP_044026985.1">
    <property type="nucleotide sequence ID" value="NC_008044.1"/>
</dbReference>
<dbReference type="SMR" id="Q1GK93"/>
<dbReference type="STRING" id="292414.TM1040_0190"/>
<dbReference type="KEGG" id="sit:TM1040_0190"/>
<dbReference type="eggNOG" id="COG0319">
    <property type="taxonomic scope" value="Bacteria"/>
</dbReference>
<dbReference type="HOGENOM" id="CLU_106710_0_0_5"/>
<dbReference type="OrthoDB" id="9807740at2"/>
<dbReference type="Proteomes" id="UP000000636">
    <property type="component" value="Chromosome"/>
</dbReference>
<dbReference type="GO" id="GO:0005737">
    <property type="term" value="C:cytoplasm"/>
    <property type="evidence" value="ECO:0007669"/>
    <property type="project" value="UniProtKB-SubCell"/>
</dbReference>
<dbReference type="GO" id="GO:0004222">
    <property type="term" value="F:metalloendopeptidase activity"/>
    <property type="evidence" value="ECO:0007669"/>
    <property type="project" value="InterPro"/>
</dbReference>
<dbReference type="GO" id="GO:0004521">
    <property type="term" value="F:RNA endonuclease activity"/>
    <property type="evidence" value="ECO:0007669"/>
    <property type="project" value="UniProtKB-UniRule"/>
</dbReference>
<dbReference type="GO" id="GO:0008270">
    <property type="term" value="F:zinc ion binding"/>
    <property type="evidence" value="ECO:0007669"/>
    <property type="project" value="UniProtKB-UniRule"/>
</dbReference>
<dbReference type="GO" id="GO:0006364">
    <property type="term" value="P:rRNA processing"/>
    <property type="evidence" value="ECO:0007669"/>
    <property type="project" value="UniProtKB-UniRule"/>
</dbReference>
<dbReference type="Gene3D" id="3.40.390.30">
    <property type="entry name" value="Metalloproteases ('zincins'), catalytic domain"/>
    <property type="match status" value="1"/>
</dbReference>
<dbReference type="HAMAP" id="MF_00009">
    <property type="entry name" value="Endoribonucl_YbeY"/>
    <property type="match status" value="1"/>
</dbReference>
<dbReference type="InterPro" id="IPR023091">
    <property type="entry name" value="MetalPrtase_cat_dom_sf_prd"/>
</dbReference>
<dbReference type="InterPro" id="IPR002036">
    <property type="entry name" value="YbeY"/>
</dbReference>
<dbReference type="InterPro" id="IPR020549">
    <property type="entry name" value="YbeY_CS"/>
</dbReference>
<dbReference type="NCBIfam" id="TIGR00043">
    <property type="entry name" value="rRNA maturation RNase YbeY"/>
    <property type="match status" value="1"/>
</dbReference>
<dbReference type="PANTHER" id="PTHR46986">
    <property type="entry name" value="ENDORIBONUCLEASE YBEY, CHLOROPLASTIC"/>
    <property type="match status" value="1"/>
</dbReference>
<dbReference type="PANTHER" id="PTHR46986:SF1">
    <property type="entry name" value="ENDORIBONUCLEASE YBEY, CHLOROPLASTIC"/>
    <property type="match status" value="1"/>
</dbReference>
<dbReference type="Pfam" id="PF02130">
    <property type="entry name" value="YbeY"/>
    <property type="match status" value="1"/>
</dbReference>
<dbReference type="SUPFAM" id="SSF55486">
    <property type="entry name" value="Metalloproteases ('zincins'), catalytic domain"/>
    <property type="match status" value="1"/>
</dbReference>
<dbReference type="PROSITE" id="PS01306">
    <property type="entry name" value="UPF0054"/>
    <property type="match status" value="1"/>
</dbReference>
<accession>Q1GK93</accession>
<organism>
    <name type="scientific">Ruegeria sp. (strain TM1040)</name>
    <name type="common">Silicibacter sp.</name>
    <dbReference type="NCBI Taxonomy" id="292414"/>
    <lineage>
        <taxon>Bacteria</taxon>
        <taxon>Pseudomonadati</taxon>
        <taxon>Pseudomonadota</taxon>
        <taxon>Alphaproteobacteria</taxon>
        <taxon>Rhodobacterales</taxon>
        <taxon>Roseobacteraceae</taxon>
        <taxon>Ruegeria</taxon>
    </lineage>
</organism>
<feature type="chain" id="PRO_0000284314" description="Endoribonuclease YbeY">
    <location>
        <begin position="1"/>
        <end position="170"/>
    </location>
</feature>
<feature type="binding site" evidence="1">
    <location>
        <position position="128"/>
    </location>
    <ligand>
        <name>Zn(2+)</name>
        <dbReference type="ChEBI" id="CHEBI:29105"/>
        <note>catalytic</note>
    </ligand>
</feature>
<feature type="binding site" evidence="1">
    <location>
        <position position="132"/>
    </location>
    <ligand>
        <name>Zn(2+)</name>
        <dbReference type="ChEBI" id="CHEBI:29105"/>
        <note>catalytic</note>
    </ligand>
</feature>
<feature type="binding site" evidence="1">
    <location>
        <position position="138"/>
    </location>
    <ligand>
        <name>Zn(2+)</name>
        <dbReference type="ChEBI" id="CHEBI:29105"/>
        <note>catalytic</note>
    </ligand>
</feature>